<keyword id="KW-1185">Reference proteome</keyword>
<sequence>MQYRRAGLNILIMKSWSYLVTLAGVNEKGEVKQEEALYIVATPMDENLFKDVKYSCFSEHYIPEENAIKHGQAYALGVDFEIENPEEYGIEFFNEDDELYIFKEGIPMKEGLKNVFKILMKKLEKEGFNKDFETIRDIGTPSEDLMRECLLEAIKEK</sequence>
<proteinExistence type="predicted"/>
<dbReference type="EMBL" id="AE000657">
    <property type="protein sequence ID" value="AAC07038.1"/>
    <property type="molecule type" value="Genomic_DNA"/>
</dbReference>
<dbReference type="PIR" id="A70381">
    <property type="entry name" value="A70381"/>
</dbReference>
<dbReference type="RefSeq" id="NP_213639.1">
    <property type="nucleotide sequence ID" value="NC_000918.1"/>
</dbReference>
<dbReference type="STRING" id="224324.aq_935"/>
<dbReference type="EnsemblBacteria" id="AAC07038">
    <property type="protein sequence ID" value="AAC07038"/>
    <property type="gene ID" value="aq_935"/>
</dbReference>
<dbReference type="KEGG" id="aae:aq_935"/>
<dbReference type="HOGENOM" id="CLU_1805233_0_0_0"/>
<dbReference type="InParanoid" id="O67076"/>
<dbReference type="OrthoDB" id="13882at2"/>
<dbReference type="Proteomes" id="UP000000798">
    <property type="component" value="Chromosome"/>
</dbReference>
<feature type="chain" id="PRO_0000186890" description="Uncharacterized protein aq_935">
    <location>
        <begin position="1"/>
        <end position="157"/>
    </location>
</feature>
<gene>
    <name type="ordered locus">aq_935</name>
</gene>
<accession>O67076</accession>
<name>Y935_AQUAE</name>
<reference key="1">
    <citation type="journal article" date="1998" name="Nature">
        <title>The complete genome of the hyperthermophilic bacterium Aquifex aeolicus.</title>
        <authorList>
            <person name="Deckert G."/>
            <person name="Warren P.V."/>
            <person name="Gaasterland T."/>
            <person name="Young W.G."/>
            <person name="Lenox A.L."/>
            <person name="Graham D.E."/>
            <person name="Overbeek R."/>
            <person name="Snead M.A."/>
            <person name="Keller M."/>
            <person name="Aujay M."/>
            <person name="Huber R."/>
            <person name="Feldman R.A."/>
            <person name="Short J.M."/>
            <person name="Olsen G.J."/>
            <person name="Swanson R.V."/>
        </authorList>
    </citation>
    <scope>NUCLEOTIDE SEQUENCE [LARGE SCALE GENOMIC DNA]</scope>
    <source>
        <strain>VF5</strain>
    </source>
</reference>
<protein>
    <recommendedName>
        <fullName>Uncharacterized protein aq_935</fullName>
    </recommendedName>
</protein>
<organism>
    <name type="scientific">Aquifex aeolicus (strain VF5)</name>
    <dbReference type="NCBI Taxonomy" id="224324"/>
    <lineage>
        <taxon>Bacteria</taxon>
        <taxon>Pseudomonadati</taxon>
        <taxon>Aquificota</taxon>
        <taxon>Aquificia</taxon>
        <taxon>Aquificales</taxon>
        <taxon>Aquificaceae</taxon>
        <taxon>Aquifex</taxon>
    </lineage>
</organism>